<protein>
    <recommendedName>
        <fullName>Monopolar attachment protein 1</fullName>
    </recommendedName>
    <alternativeName>
        <fullName>Meiotically up-regulated gene 159 protein</fullName>
    </alternativeName>
</protein>
<reference key="1">
    <citation type="journal article" date="2005" name="Cell">
        <title>The kinetochore protein moa1 enables cohesion-mediated monopolar attachment at meiosis I.</title>
        <authorList>
            <person name="Yokobayashi S."/>
            <person name="Watanabe Y."/>
        </authorList>
    </citation>
    <scope>NUCLEOTIDE SEQUENCE [GENOMIC DNA]</scope>
    <scope>FUNCTION</scope>
    <scope>SUBCELLULAR LOCATION</scope>
    <scope>DEVELOPMENTAL STAGE</scope>
    <scope>INTERACTION WITH REC8</scope>
</reference>
<reference key="2">
    <citation type="journal article" date="2002" name="Nature">
        <title>The genome sequence of Schizosaccharomyces pombe.</title>
        <authorList>
            <person name="Wood V."/>
            <person name="Gwilliam R."/>
            <person name="Rajandream M.A."/>
            <person name="Lyne M.H."/>
            <person name="Lyne R."/>
            <person name="Stewart A."/>
            <person name="Sgouros J.G."/>
            <person name="Peat N."/>
            <person name="Hayles J."/>
            <person name="Baker S.G."/>
            <person name="Basham D."/>
            <person name="Bowman S."/>
            <person name="Brooks K."/>
            <person name="Brown D."/>
            <person name="Brown S."/>
            <person name="Chillingworth T."/>
            <person name="Churcher C.M."/>
            <person name="Collins M."/>
            <person name="Connor R."/>
            <person name="Cronin A."/>
            <person name="Davis P."/>
            <person name="Feltwell T."/>
            <person name="Fraser A."/>
            <person name="Gentles S."/>
            <person name="Goble A."/>
            <person name="Hamlin N."/>
            <person name="Harris D.E."/>
            <person name="Hidalgo J."/>
            <person name="Hodgson G."/>
            <person name="Holroyd S."/>
            <person name="Hornsby T."/>
            <person name="Howarth S."/>
            <person name="Huckle E.J."/>
            <person name="Hunt S."/>
            <person name="Jagels K."/>
            <person name="James K.D."/>
            <person name="Jones L."/>
            <person name="Jones M."/>
            <person name="Leather S."/>
            <person name="McDonald S."/>
            <person name="McLean J."/>
            <person name="Mooney P."/>
            <person name="Moule S."/>
            <person name="Mungall K.L."/>
            <person name="Murphy L.D."/>
            <person name="Niblett D."/>
            <person name="Odell C."/>
            <person name="Oliver K."/>
            <person name="O'Neil S."/>
            <person name="Pearson D."/>
            <person name="Quail M.A."/>
            <person name="Rabbinowitsch E."/>
            <person name="Rutherford K.M."/>
            <person name="Rutter S."/>
            <person name="Saunders D."/>
            <person name="Seeger K."/>
            <person name="Sharp S."/>
            <person name="Skelton J."/>
            <person name="Simmonds M.N."/>
            <person name="Squares R."/>
            <person name="Squares S."/>
            <person name="Stevens K."/>
            <person name="Taylor K."/>
            <person name="Taylor R.G."/>
            <person name="Tivey A."/>
            <person name="Walsh S.V."/>
            <person name="Warren T."/>
            <person name="Whitehead S."/>
            <person name="Woodward J.R."/>
            <person name="Volckaert G."/>
            <person name="Aert R."/>
            <person name="Robben J."/>
            <person name="Grymonprez B."/>
            <person name="Weltjens I."/>
            <person name="Vanstreels E."/>
            <person name="Rieger M."/>
            <person name="Schaefer M."/>
            <person name="Mueller-Auer S."/>
            <person name="Gabel C."/>
            <person name="Fuchs M."/>
            <person name="Duesterhoeft A."/>
            <person name="Fritzc C."/>
            <person name="Holzer E."/>
            <person name="Moestl D."/>
            <person name="Hilbert H."/>
            <person name="Borzym K."/>
            <person name="Langer I."/>
            <person name="Beck A."/>
            <person name="Lehrach H."/>
            <person name="Reinhardt R."/>
            <person name="Pohl T.M."/>
            <person name="Eger P."/>
            <person name="Zimmermann W."/>
            <person name="Wedler H."/>
            <person name="Wambutt R."/>
            <person name="Purnelle B."/>
            <person name="Goffeau A."/>
            <person name="Cadieu E."/>
            <person name="Dreano S."/>
            <person name="Gloux S."/>
            <person name="Lelaure V."/>
            <person name="Mottier S."/>
            <person name="Galibert F."/>
            <person name="Aves S.J."/>
            <person name="Xiang Z."/>
            <person name="Hunt C."/>
            <person name="Moore K."/>
            <person name="Hurst S.M."/>
            <person name="Lucas M."/>
            <person name="Rochet M."/>
            <person name="Gaillardin C."/>
            <person name="Tallada V.A."/>
            <person name="Garzon A."/>
            <person name="Thode G."/>
            <person name="Daga R.R."/>
            <person name="Cruzado L."/>
            <person name="Jimenez J."/>
            <person name="Sanchez M."/>
            <person name="del Rey F."/>
            <person name="Benito J."/>
            <person name="Dominguez A."/>
            <person name="Revuelta J.L."/>
            <person name="Moreno S."/>
            <person name="Armstrong J."/>
            <person name="Forsburg S.L."/>
            <person name="Cerutti L."/>
            <person name="Lowe T."/>
            <person name="McCombie W.R."/>
            <person name="Paulsen I."/>
            <person name="Potashkin J."/>
            <person name="Shpakovski G.V."/>
            <person name="Ussery D."/>
            <person name="Barrell B.G."/>
            <person name="Nurse P."/>
        </authorList>
    </citation>
    <scope>NUCLEOTIDE SEQUENCE [LARGE SCALE GENOMIC DNA]</scope>
    <source>
        <strain>972 / ATCC 24843</strain>
    </source>
</reference>
<reference key="3">
    <citation type="journal article" date="2005" name="Curr. Biol.">
        <title>A large-scale screen in S. pombe identifies seven novel genes required for critical meiotic events.</title>
        <authorList>
            <person name="Martin-Castellanos C."/>
            <person name="Blanco M."/>
            <person name="Rozalen A.E."/>
            <person name="Perez-Hidalgo L."/>
            <person name="Garcia A.I."/>
            <person name="Conde F."/>
            <person name="Mata J."/>
            <person name="Ellermeier C."/>
            <person name="Davis L."/>
            <person name="San-Segundo P."/>
            <person name="Smith G.R."/>
            <person name="Moreno S."/>
        </authorList>
    </citation>
    <scope>FUNCTION IN MEIOSIS</scope>
</reference>
<reference key="4">
    <citation type="journal article" date="2006" name="Nat. Biotechnol.">
        <title>ORFeome cloning and global analysis of protein localization in the fission yeast Schizosaccharomyces pombe.</title>
        <authorList>
            <person name="Matsuyama A."/>
            <person name="Arai R."/>
            <person name="Yashiroda Y."/>
            <person name="Shirai A."/>
            <person name="Kamata A."/>
            <person name="Sekido S."/>
            <person name="Kobayashi Y."/>
            <person name="Hashimoto A."/>
            <person name="Hamamoto M."/>
            <person name="Hiraoka Y."/>
            <person name="Horinouchi S."/>
            <person name="Yoshida M."/>
        </authorList>
    </citation>
    <scope>SUBCELLULAR LOCATION [LARGE SCALE ANALYSIS]</scope>
</reference>
<reference key="5">
    <citation type="journal article" date="2015" name="Nature">
        <title>Meikin is a conserved regulator of meiosis-I-specific kinetochore function.</title>
        <authorList>
            <person name="Kim J."/>
            <person name="Ishiguro K."/>
            <person name="Nambu A."/>
            <person name="Akiyoshi B."/>
            <person name="Yokobayashi S."/>
            <person name="Kagami A."/>
            <person name="Ishiguro T."/>
            <person name="Pendas A.M."/>
            <person name="Takeda N."/>
            <person name="Sakakibara Y."/>
            <person name="Kitajima T.S."/>
            <person name="Tanno Y."/>
            <person name="Sakuno T."/>
            <person name="Watanabe Y."/>
        </authorList>
    </citation>
    <scope>FUNCTION</scope>
    <scope>INTERACTION WITH PLO1</scope>
    <scope>SUBCELLULAR LOCATION</scope>
    <scope>MUTAGENESIS OF THR-101</scope>
</reference>
<dbReference type="EMBL" id="AB232928">
    <property type="protein sequence ID" value="BAE46564.1"/>
    <property type="molecule type" value="Genomic_DNA"/>
</dbReference>
<dbReference type="EMBL" id="CU329670">
    <property type="protein sequence ID" value="CAB52426.1"/>
    <property type="molecule type" value="Genomic_DNA"/>
</dbReference>
<dbReference type="PIR" id="T37722">
    <property type="entry name" value="T37722"/>
</dbReference>
<dbReference type="RefSeq" id="NP_594308.1">
    <property type="nucleotide sequence ID" value="NM_001019731.1"/>
</dbReference>
<dbReference type="BioGRID" id="279256">
    <property type="interactions" value="11"/>
</dbReference>
<dbReference type="FunCoup" id="Q9UTI4">
    <property type="interactions" value="3"/>
</dbReference>
<dbReference type="IntAct" id="Q9UTI4">
    <property type="interactions" value="3"/>
</dbReference>
<dbReference type="STRING" id="284812.Q9UTI4"/>
<dbReference type="iPTMnet" id="Q9UTI4"/>
<dbReference type="PaxDb" id="4896-SPAC15E1.07c.1"/>
<dbReference type="EnsemblFungi" id="SPAC15E1.07c.1">
    <property type="protein sequence ID" value="SPAC15E1.07c.1:pep"/>
    <property type="gene ID" value="SPAC15E1.07c"/>
</dbReference>
<dbReference type="GeneID" id="2542808"/>
<dbReference type="KEGG" id="spo:2542808"/>
<dbReference type="PomBase" id="SPAC15E1.07c">
    <property type="gene designation" value="moa1"/>
</dbReference>
<dbReference type="VEuPathDB" id="FungiDB:SPAC15E1.07c"/>
<dbReference type="HOGENOM" id="CLU_1556158_0_0_1"/>
<dbReference type="InParanoid" id="Q9UTI4"/>
<dbReference type="PRO" id="PR:Q9UTI4"/>
<dbReference type="Proteomes" id="UP000002485">
    <property type="component" value="Chromosome I"/>
</dbReference>
<dbReference type="GO" id="GO:0061638">
    <property type="term" value="C:CENP-A containing chromatin"/>
    <property type="evidence" value="ECO:0000314"/>
    <property type="project" value="PomBase"/>
</dbReference>
<dbReference type="GO" id="GO:0000776">
    <property type="term" value="C:kinetochore"/>
    <property type="evidence" value="ECO:0000305"/>
    <property type="project" value="PomBase"/>
</dbReference>
<dbReference type="GO" id="GO:0005634">
    <property type="term" value="C:nucleus"/>
    <property type="evidence" value="ECO:0000305"/>
    <property type="project" value="PomBase"/>
</dbReference>
<dbReference type="GO" id="GO:0140483">
    <property type="term" value="F:kinetochore adaptor activity"/>
    <property type="evidence" value="ECO:0000353"/>
    <property type="project" value="PomBase"/>
</dbReference>
<dbReference type="GO" id="GO:0051301">
    <property type="term" value="P:cell division"/>
    <property type="evidence" value="ECO:0007669"/>
    <property type="project" value="UniProtKB-KW"/>
</dbReference>
<dbReference type="GO" id="GO:0031619">
    <property type="term" value="P:homologous chromosome orientation in meiotic metaphase I"/>
    <property type="evidence" value="ECO:0000315"/>
    <property type="project" value="PomBase"/>
</dbReference>
<dbReference type="GO" id="GO:0051321">
    <property type="term" value="P:meiotic cell cycle"/>
    <property type="evidence" value="ECO:0000315"/>
    <property type="project" value="PomBase"/>
</dbReference>
<dbReference type="GO" id="GO:1990813">
    <property type="term" value="P:meiotic centromeric cohesion protection in anaphase I"/>
    <property type="evidence" value="ECO:0000315"/>
    <property type="project" value="PomBase"/>
</dbReference>
<dbReference type="GO" id="GO:0045132">
    <property type="term" value="P:meiotic chromosome segregation"/>
    <property type="evidence" value="ECO:0000315"/>
    <property type="project" value="PomBase"/>
</dbReference>
<dbReference type="GO" id="GO:0051455">
    <property type="term" value="P:spindle attachment to meiosis I kinetochore"/>
    <property type="evidence" value="ECO:0000315"/>
    <property type="project" value="PomBase"/>
</dbReference>
<name>MOA1_SCHPO</name>
<gene>
    <name type="primary">moa1</name>
    <name type="synonym">mug159</name>
    <name type="ORF">SPAC15E1.07c</name>
</gene>
<organism>
    <name type="scientific">Schizosaccharomyces pombe (strain 972 / ATCC 24843)</name>
    <name type="common">Fission yeast</name>
    <dbReference type="NCBI Taxonomy" id="284812"/>
    <lineage>
        <taxon>Eukaryota</taxon>
        <taxon>Fungi</taxon>
        <taxon>Dikarya</taxon>
        <taxon>Ascomycota</taxon>
        <taxon>Taphrinomycotina</taxon>
        <taxon>Schizosaccharomycetes</taxon>
        <taxon>Schizosaccharomycetales</taxon>
        <taxon>Schizosaccharomycetaceae</taxon>
        <taxon>Schizosaccharomyces</taxon>
    </lineage>
</organism>
<accession>Q9UTI4</accession>
<feature type="chain" id="PRO_0000076264" description="Monopolar attachment protein 1">
    <location>
        <begin position="1"/>
        <end position="172"/>
    </location>
</feature>
<feature type="region of interest" description="Disordered" evidence="1">
    <location>
        <begin position="15"/>
        <end position="43"/>
    </location>
</feature>
<feature type="short sequence motif" description="POLO box domain (PBD)-binding" evidence="5">
    <location>
        <begin position="100"/>
        <end position="102"/>
    </location>
</feature>
<feature type="compositionally biased region" description="Basic residues" evidence="1">
    <location>
        <begin position="15"/>
        <end position="30"/>
    </location>
</feature>
<feature type="compositionally biased region" description="Polar residues" evidence="1">
    <location>
        <begin position="31"/>
        <end position="43"/>
    </location>
</feature>
<feature type="mutagenesis site" description="Abolition of meiosis-specific enrichment of plo1 to kinetochores." evidence="4">
    <original>T</original>
    <variation>A</variation>
    <location>
        <position position="101"/>
    </location>
</feature>
<sequence>MAINNENELEYKLIKKNKNPKISNSKKKNSTRPALQDKTNQTLPIHQNQAFSNILPSDFSIIKTPETKTADDFPVNGYEGLNILKFDLELFYKLKPVATSTPKSCMRTGSNLFLNETVKHVPDERLVSNIKNTQTKDSITRDSAYYHRKTMTESIIKTLAAFDAEVDEIILF</sequence>
<proteinExistence type="evidence at protein level"/>
<keyword id="KW-0131">Cell cycle</keyword>
<keyword id="KW-0132">Cell division</keyword>
<keyword id="KW-0137">Centromere</keyword>
<keyword id="KW-0158">Chromosome</keyword>
<keyword id="KW-0159">Chromosome partition</keyword>
<keyword id="KW-0995">Kinetochore</keyword>
<keyword id="KW-0469">Meiosis</keyword>
<keyword id="KW-0539">Nucleus</keyword>
<keyword id="KW-1185">Reference proteome</keyword>
<evidence type="ECO:0000256" key="1">
    <source>
        <dbReference type="SAM" id="MobiDB-lite"/>
    </source>
</evidence>
<evidence type="ECO:0000269" key="2">
    <source>
    </source>
</evidence>
<evidence type="ECO:0000269" key="3">
    <source>
    </source>
</evidence>
<evidence type="ECO:0000269" key="4">
    <source>
    </source>
</evidence>
<evidence type="ECO:0000305" key="5">
    <source>
    </source>
</evidence>
<comment type="function">
    <text evidence="2 3 4">Plays an important role in chromosome segregation during meiosis I by allowing meiotic rec8 to establish cohesion at the centromeric central core and thereby promote the side-by-side structure of kinetochores at meiosis I. Enables monopolar attachment during meiosis I (PubMed:16303567, PubMed:16325576). Required to facilitate kinetochore mono-orientation during meiosis I, when kinetochores on sister chromosomes face the same direction and are thus captured and pulled by spindle fibers from the same pole (PubMed:25533956). Acts in collaboration with plo1 (PubMed:25533956).</text>
</comment>
<comment type="subunit">
    <text evidence="3 4">Interacts with rec8 (PubMed:16325576), Interacts with plo1 (PubMed:25533956).</text>
</comment>
<comment type="interaction">
    <interactant intactId="EBI-1564258">
        <id>Q9UTI4</id>
    </interactant>
    <interactant intactId="EBI-1564281">
        <id>P36626</id>
        <label>rec8</label>
    </interactant>
    <organismsDiffer>false</organismsDiffer>
    <experiments>2</experiments>
</comment>
<comment type="subcellular location">
    <subcellularLocation>
        <location>Nucleus</location>
    </subcellularLocation>
    <subcellularLocation>
        <location evidence="3">Chromosome</location>
        <location evidence="3">Centromere</location>
    </subcellularLocation>
    <subcellularLocation>
        <location evidence="3 5">Chromosome</location>
        <location evidence="3 5">Centromere</location>
        <location evidence="3 5">Kinetochore</location>
    </subcellularLocation>
    <text evidence="3">Localizes to the centromere. Does not require rec8 for centromeric localization but instead cnp3.</text>
</comment>
<comment type="developmental stage">
    <text evidence="3">Present during meiotic prophase I, when monopolar attachment of kinetochores to spindle microtubules is established. First appears during prophase I and localizes to several punctate dots in the nucleus until metaphase I. At the onset of anaphase I, it decreases markedly and remains absent until telophase I. Does not reappear during meiosis II.</text>
</comment>